<keyword id="KW-0175">Coiled coil</keyword>
<keyword id="KW-1035">Host cytoplasm</keyword>
<keyword id="KW-0426">Late protein</keyword>
<keyword id="KW-0597">Phosphoprotein</keyword>
<keyword id="KW-1185">Reference proteome</keyword>
<name>PG137_VACCW</name>
<sequence>MTTVPVTDIQNDLITEFSEDNYPSNKNYEITLRQMSILTHVNNVVDREHNAAVVSSPEEISSQLNEDLFPDDDSPATIIERVQPHTTIIDDTPPPTFRRELLISEQRQQREKRFNITVSKNAEAIMESRSMITSMPTQTPSLGVVYDKDKRIQMLEDEVVNLRNQRSNTKSSDNLDNFTKILFGKTPYKSTEVNKRIAIVNYANLNGSPLSVEDLDVCSEDEIDRIYKTIKQYHESRKQKIIVTNVIIIVINIIEQALLKLGFEEIKGLSTDITSEIIDVEIGDDCDAVASKLGIGNSPVLNIVLFILKIFVKRIKII</sequence>
<proteinExistence type="evidence at protein level"/>
<organism>
    <name type="scientific">Vaccinia virus (strain Western Reserve)</name>
    <name type="common">VACV</name>
    <name type="synonym">Vaccinia virus (strain WR)</name>
    <dbReference type="NCBI Taxonomy" id="10254"/>
    <lineage>
        <taxon>Viruses</taxon>
        <taxon>Varidnaviria</taxon>
        <taxon>Bamfordvirae</taxon>
        <taxon>Nucleocytoviricota</taxon>
        <taxon>Pokkesviricetes</taxon>
        <taxon>Chitovirales</taxon>
        <taxon>Poxviridae</taxon>
        <taxon>Chordopoxvirinae</taxon>
        <taxon>Orthopoxvirus</taxon>
        <taxon>Vaccinia virus</taxon>
    </lineage>
</organism>
<gene>
    <name type="primary">OPG137</name>
    <name type="ordered locus">VACWR130</name>
    <name type="ORF">A11R</name>
</gene>
<reference key="1">
    <citation type="submission" date="2003-02" db="EMBL/GenBank/DDBJ databases">
        <title>Sequencing of the coding region of Vaccinia-WR to an average 9-fold redundancy and an error rate of 0.16/10kb.</title>
        <authorList>
            <person name="Esposito J.J."/>
            <person name="Frace A.M."/>
            <person name="Sammons S.A."/>
            <person name="Olsen-Rasmussen M."/>
            <person name="Osborne J."/>
            <person name="Wohlhueter R."/>
        </authorList>
    </citation>
    <scope>NUCLEOTIDE SEQUENCE [LARGE SCALE GENOMIC DNA]</scope>
</reference>
<reference key="2">
    <citation type="journal article" date="2005" name="J. Virol.">
        <title>Vaccinia virus nonstructural protein encoded by the A11R gene is required for formation of the virion membrane.</title>
        <authorList>
            <person name="Resch W."/>
            <person name="Weisberg A.S."/>
            <person name="Moss B."/>
        </authorList>
    </citation>
    <scope>FUNCTION</scope>
    <scope>INDUCTION</scope>
    <scope>PHOSPHORYLATION</scope>
    <scope>INTERACTION WITH OPG160</scope>
    <scope>SUBUNIT</scope>
</reference>
<evidence type="ECO:0000255" key="1"/>
<evidence type="ECO:0000269" key="2">
    <source>
    </source>
</evidence>
<evidence type="ECO:0000305" key="3"/>
<accession>Q80HV8</accession>
<protein>
    <recommendedName>
        <fullName>Protein OPG137</fullName>
    </recommendedName>
</protein>
<dbReference type="EMBL" id="AY243312">
    <property type="protein sequence ID" value="AAO89409.1"/>
    <property type="molecule type" value="Genomic_DNA"/>
</dbReference>
<dbReference type="RefSeq" id="YP_233012.1">
    <property type="nucleotide sequence ID" value="NC_006998.1"/>
</dbReference>
<dbReference type="SMR" id="Q80HV8"/>
<dbReference type="DNASU" id="3707528"/>
<dbReference type="GeneID" id="3707528"/>
<dbReference type="KEGG" id="vg:3707528"/>
<dbReference type="Proteomes" id="UP000000344">
    <property type="component" value="Genome"/>
</dbReference>
<dbReference type="GO" id="GO:0030430">
    <property type="term" value="C:host cell cytoplasm"/>
    <property type="evidence" value="ECO:0007669"/>
    <property type="project" value="UniProtKB-SubCell"/>
</dbReference>
<dbReference type="InterPro" id="IPR007755">
    <property type="entry name" value="Poxvirus_A11"/>
</dbReference>
<dbReference type="Pfam" id="PF05061">
    <property type="entry name" value="Pox_A11"/>
    <property type="match status" value="1"/>
</dbReference>
<comment type="function">
    <text evidence="2">Required for viral crescent formation early during virus morphogenesis.</text>
</comment>
<comment type="subunit">
    <text evidence="2 3">Homomultimer (Probable). Interacts with OPG160.</text>
</comment>
<comment type="subcellular location">
    <subcellularLocation>
        <location>Host cytoplasm</location>
    </subcellularLocation>
    <text>Localizes to the cytoplasmic viral factory. Not incorporated into virus particles. Does not seem to be a transmembrane protein.</text>
</comment>
<comment type="induction">
    <text evidence="2">Expressed in the late phase of the viral replicative cycle.</text>
</comment>
<comment type="PTM">
    <text evidence="2">Phosphorylated by a OPG054-independent mechanism.</text>
</comment>
<comment type="similarity">
    <text evidence="3">Belongs to the orthopoxvirus OPG137 family.</text>
</comment>
<organismHost>
    <name type="scientific">Bos taurus</name>
    <name type="common">Bovine</name>
    <dbReference type="NCBI Taxonomy" id="9913"/>
</organismHost>
<feature type="chain" id="PRO_0000099232" description="Protein OPG137">
    <location>
        <begin position="1"/>
        <end position="318"/>
    </location>
</feature>
<feature type="coiled-coil region" evidence="1">
    <location>
        <begin position="145"/>
        <end position="172"/>
    </location>
</feature>